<protein>
    <recommendedName>
        <fullName evidence="1">Glycine dehydrogenase (decarboxylating)</fullName>
        <ecNumber evidence="1">1.4.4.2</ecNumber>
    </recommendedName>
    <alternativeName>
        <fullName evidence="1">Glycine cleavage system P-protein</fullName>
    </alternativeName>
    <alternativeName>
        <fullName evidence="1">Glycine decarboxylase</fullName>
    </alternativeName>
    <alternativeName>
        <fullName evidence="1">Glycine dehydrogenase (aminomethyl-transferring)</fullName>
    </alternativeName>
</protein>
<organism>
    <name type="scientific">Prochlorococcus marinus (strain NATL2A)</name>
    <dbReference type="NCBI Taxonomy" id="59920"/>
    <lineage>
        <taxon>Bacteria</taxon>
        <taxon>Bacillati</taxon>
        <taxon>Cyanobacteriota</taxon>
        <taxon>Cyanophyceae</taxon>
        <taxon>Synechococcales</taxon>
        <taxon>Prochlorococcaceae</taxon>
        <taxon>Prochlorococcus</taxon>
    </lineage>
</organism>
<reference key="1">
    <citation type="journal article" date="2007" name="PLoS Genet.">
        <title>Patterns and implications of gene gain and loss in the evolution of Prochlorococcus.</title>
        <authorList>
            <person name="Kettler G.C."/>
            <person name="Martiny A.C."/>
            <person name="Huang K."/>
            <person name="Zucker J."/>
            <person name="Coleman M.L."/>
            <person name="Rodrigue S."/>
            <person name="Chen F."/>
            <person name="Lapidus A."/>
            <person name="Ferriera S."/>
            <person name="Johnson J."/>
            <person name="Steglich C."/>
            <person name="Church G.M."/>
            <person name="Richardson P."/>
            <person name="Chisholm S.W."/>
        </authorList>
    </citation>
    <scope>NUCLEOTIDE SEQUENCE [LARGE SCALE GENOMIC DNA]</scope>
    <source>
        <strain>NATL2A</strain>
    </source>
</reference>
<proteinExistence type="inferred from homology"/>
<comment type="function">
    <text evidence="1">The glycine cleavage system catalyzes the degradation of glycine. The P protein binds the alpha-amino group of glycine through its pyridoxal phosphate cofactor; CO(2) is released and the remaining methylamine moiety is then transferred to the lipoamide cofactor of the H protein.</text>
</comment>
<comment type="catalytic activity">
    <reaction evidence="1">
        <text>N(6)-[(R)-lipoyl]-L-lysyl-[glycine-cleavage complex H protein] + glycine + H(+) = N(6)-[(R)-S(8)-aminomethyldihydrolipoyl]-L-lysyl-[glycine-cleavage complex H protein] + CO2</text>
        <dbReference type="Rhea" id="RHEA:24304"/>
        <dbReference type="Rhea" id="RHEA-COMP:10494"/>
        <dbReference type="Rhea" id="RHEA-COMP:10495"/>
        <dbReference type="ChEBI" id="CHEBI:15378"/>
        <dbReference type="ChEBI" id="CHEBI:16526"/>
        <dbReference type="ChEBI" id="CHEBI:57305"/>
        <dbReference type="ChEBI" id="CHEBI:83099"/>
        <dbReference type="ChEBI" id="CHEBI:83143"/>
        <dbReference type="EC" id="1.4.4.2"/>
    </reaction>
</comment>
<comment type="cofactor">
    <cofactor evidence="1">
        <name>pyridoxal 5'-phosphate</name>
        <dbReference type="ChEBI" id="CHEBI:597326"/>
    </cofactor>
</comment>
<comment type="subunit">
    <text evidence="1">The glycine cleavage system is composed of four proteins: P, T, L and H.</text>
</comment>
<comment type="similarity">
    <text evidence="1">Belongs to the GcvP family.</text>
</comment>
<accession>Q46IC1</accession>
<evidence type="ECO:0000255" key="1">
    <source>
        <dbReference type="HAMAP-Rule" id="MF_00711"/>
    </source>
</evidence>
<gene>
    <name evidence="1" type="primary">gcvP</name>
    <name type="ordered locus">PMN2A_1267</name>
</gene>
<sequence>MSKAELKDFTFKSRHIGPTNEDEALMLQHLGYENAEEFISSVIPNEIFDSENNGVSIPDGCDQNKALTEINIISKKNVEHRSLIGLGYHSTVIPPVIQRNVLENPNWYTAYTPYQAEISQGRLEALFNFQTLISELTGLPISNASLLDEATAAAEAISLSLTVRKNKNANKFLVDQEILPQTLDVLKTRCEPLGISLEMFDNNNFEIDKNVFGILIQLPGKNGRIWDPTKIINDAHKCNAIVTIAIDPLAQVLIKPMGEFGADIVVGSAQRFGVPIAFGGPHAAFFATKEIYKRQIPGRIVGQSVDVEGNQALRLALQTREQHIRRDKATSNICTAQVLLAVLSSFYAVHHGPKGLKQIAENVVKYRSNFESILMNLEYPIEKYSAFDSVDVYCSEASEVIQLASEEGYNLRVLPIGSDFENAKGFGVTFDELTCDEEIYKLHQILAQVKGKKTHDLSNFIFENASLIDIPLREKSWLEQSVFNQYQSETDLMRYIHCLVSKDFSLVQGMIPLGSCTMKLNAAAELLPIEWREFSSIHPFAPHTQLTGFHEIINDLENWLSALTGFQGVSLQPNAGSQGEFAGLLVIRSWHQSLGEGHRNICLIPTSAHGTNPASAVMSGFKVVSVKCDEYGNVDLEDLKNKSKIHSKNLAALMVTYPSTHGVFEPNIREMCQVIHQEGGQVYLDGANLNAQVGICRPGSYGIDVCHLNLHKTFSIPHGGGGPGVGPIAVADHLVPYLPGHSIIKCGGQKAISAVSAAPFGSAGILPISWMYIRMMGSDGLRKASSIAILSANYLAKRLDPYYPVLFKDPNGLVAHECILDLRPLKSQLGIEVEDVAKRLMDYGFHAPTISWPVAGTLMVEPTESESLPELDRFCDAMIGIREEIEQIKLGKIDPINNPLKQSPHTLKTVTSDDWDRPYSRKEAAYPLPDQEKYKFWPSVSRINNAYGDRNLICSCPSVQDLEDINSV</sequence>
<keyword id="KW-0560">Oxidoreductase</keyword>
<keyword id="KW-0663">Pyridoxal phosphate</keyword>
<keyword id="KW-1185">Reference proteome</keyword>
<name>GCSP_PROMT</name>
<feature type="chain" id="PRO_0000227113" description="Glycine dehydrogenase (decarboxylating)">
    <location>
        <begin position="1"/>
        <end position="968"/>
    </location>
</feature>
<feature type="modified residue" description="N6-(pyridoxal phosphate)lysine" evidence="1">
    <location>
        <position position="712"/>
    </location>
</feature>
<dbReference type="EC" id="1.4.4.2" evidence="1"/>
<dbReference type="EMBL" id="CP000095">
    <property type="protein sequence ID" value="AAZ58757.1"/>
    <property type="molecule type" value="Genomic_DNA"/>
</dbReference>
<dbReference type="RefSeq" id="WP_011295611.1">
    <property type="nucleotide sequence ID" value="NC_007335.2"/>
</dbReference>
<dbReference type="SMR" id="Q46IC1"/>
<dbReference type="STRING" id="59920.PMN2A_1267"/>
<dbReference type="KEGG" id="pmn:PMN2A_1267"/>
<dbReference type="HOGENOM" id="CLU_004620_2_1_3"/>
<dbReference type="OrthoDB" id="9801272at2"/>
<dbReference type="PhylomeDB" id="Q46IC1"/>
<dbReference type="Proteomes" id="UP000002535">
    <property type="component" value="Chromosome"/>
</dbReference>
<dbReference type="GO" id="GO:0005829">
    <property type="term" value="C:cytosol"/>
    <property type="evidence" value="ECO:0007669"/>
    <property type="project" value="TreeGrafter"/>
</dbReference>
<dbReference type="GO" id="GO:0005960">
    <property type="term" value="C:glycine cleavage complex"/>
    <property type="evidence" value="ECO:0007669"/>
    <property type="project" value="TreeGrafter"/>
</dbReference>
<dbReference type="GO" id="GO:0016594">
    <property type="term" value="F:glycine binding"/>
    <property type="evidence" value="ECO:0007669"/>
    <property type="project" value="TreeGrafter"/>
</dbReference>
<dbReference type="GO" id="GO:0004375">
    <property type="term" value="F:glycine dehydrogenase (decarboxylating) activity"/>
    <property type="evidence" value="ECO:0007669"/>
    <property type="project" value="UniProtKB-EC"/>
</dbReference>
<dbReference type="GO" id="GO:0030170">
    <property type="term" value="F:pyridoxal phosphate binding"/>
    <property type="evidence" value="ECO:0007669"/>
    <property type="project" value="TreeGrafter"/>
</dbReference>
<dbReference type="GO" id="GO:0019464">
    <property type="term" value="P:glycine decarboxylation via glycine cleavage system"/>
    <property type="evidence" value="ECO:0007669"/>
    <property type="project" value="UniProtKB-UniRule"/>
</dbReference>
<dbReference type="CDD" id="cd00613">
    <property type="entry name" value="GDC-P"/>
    <property type="match status" value="1"/>
</dbReference>
<dbReference type="FunFam" id="3.40.640.10:FF:000005">
    <property type="entry name" value="Glycine dehydrogenase (decarboxylating), mitochondrial"/>
    <property type="match status" value="1"/>
</dbReference>
<dbReference type="FunFam" id="3.90.1150.10:FF:000007">
    <property type="entry name" value="Glycine dehydrogenase (decarboxylating), mitochondrial"/>
    <property type="match status" value="1"/>
</dbReference>
<dbReference type="FunFam" id="3.40.640.10:FF:000007">
    <property type="entry name" value="glycine dehydrogenase (Decarboxylating), mitochondrial"/>
    <property type="match status" value="1"/>
</dbReference>
<dbReference type="Gene3D" id="3.90.1150.10">
    <property type="entry name" value="Aspartate Aminotransferase, domain 1"/>
    <property type="match status" value="2"/>
</dbReference>
<dbReference type="Gene3D" id="3.40.640.10">
    <property type="entry name" value="Type I PLP-dependent aspartate aminotransferase-like (Major domain)"/>
    <property type="match status" value="2"/>
</dbReference>
<dbReference type="HAMAP" id="MF_00711">
    <property type="entry name" value="GcvP"/>
    <property type="match status" value="1"/>
</dbReference>
<dbReference type="InterPro" id="IPR003437">
    <property type="entry name" value="GcvP"/>
</dbReference>
<dbReference type="InterPro" id="IPR049316">
    <property type="entry name" value="GDC-P_C"/>
</dbReference>
<dbReference type="InterPro" id="IPR049315">
    <property type="entry name" value="GDC-P_N"/>
</dbReference>
<dbReference type="InterPro" id="IPR020581">
    <property type="entry name" value="GDC_P"/>
</dbReference>
<dbReference type="InterPro" id="IPR015424">
    <property type="entry name" value="PyrdxlP-dep_Trfase"/>
</dbReference>
<dbReference type="InterPro" id="IPR015421">
    <property type="entry name" value="PyrdxlP-dep_Trfase_major"/>
</dbReference>
<dbReference type="InterPro" id="IPR015422">
    <property type="entry name" value="PyrdxlP-dep_Trfase_small"/>
</dbReference>
<dbReference type="NCBIfam" id="TIGR00461">
    <property type="entry name" value="gcvP"/>
    <property type="match status" value="1"/>
</dbReference>
<dbReference type="NCBIfam" id="NF003346">
    <property type="entry name" value="PRK04366.1"/>
    <property type="match status" value="1"/>
</dbReference>
<dbReference type="PANTHER" id="PTHR11773:SF1">
    <property type="entry name" value="GLYCINE DEHYDROGENASE (DECARBOXYLATING), MITOCHONDRIAL"/>
    <property type="match status" value="1"/>
</dbReference>
<dbReference type="PANTHER" id="PTHR11773">
    <property type="entry name" value="GLYCINE DEHYDROGENASE, DECARBOXYLATING"/>
    <property type="match status" value="1"/>
</dbReference>
<dbReference type="Pfam" id="PF21478">
    <property type="entry name" value="GcvP2_C"/>
    <property type="match status" value="1"/>
</dbReference>
<dbReference type="Pfam" id="PF02347">
    <property type="entry name" value="GDC-P"/>
    <property type="match status" value="2"/>
</dbReference>
<dbReference type="SUPFAM" id="SSF53383">
    <property type="entry name" value="PLP-dependent transferases"/>
    <property type="match status" value="2"/>
</dbReference>